<proteinExistence type="inferred from homology"/>
<protein>
    <recommendedName>
        <fullName evidence="2">Small ribosomal subunit protein uS7c</fullName>
    </recommendedName>
    <alternativeName>
        <fullName>30S ribosomal protein S7, chloroplastic</fullName>
    </alternativeName>
</protein>
<reference key="1">
    <citation type="submission" date="2002-09" db="EMBL/GenBank/DDBJ databases">
        <title>Phylogenetic relationships among the major lineages of Asparagales based on a large chloroplast data set.</title>
        <authorList>
            <person name="McPherson M.A."/>
            <person name="Rai H.S."/>
            <person name="Wong W.A."/>
            <person name="Graham S.W."/>
        </authorList>
    </citation>
    <scope>NUCLEOTIDE SEQUENCE [GENOMIC DNA]</scope>
</reference>
<keyword id="KW-0150">Chloroplast</keyword>
<keyword id="KW-0934">Plastid</keyword>
<keyword id="KW-0687">Ribonucleoprotein</keyword>
<keyword id="KW-0689">Ribosomal protein</keyword>
<keyword id="KW-0694">RNA-binding</keyword>
<keyword id="KW-0699">rRNA-binding</keyword>
<name>RR7_PHOTN</name>
<feature type="chain" id="PRO_0000124487" description="Small ribosomal subunit protein uS7c">
    <location>
        <begin position="1"/>
        <end position="155"/>
    </location>
</feature>
<evidence type="ECO:0000250" key="1"/>
<evidence type="ECO:0000305" key="2"/>
<organism>
    <name type="scientific">Phormium tenax</name>
    <name type="common">New Zealand flax</name>
    <dbReference type="NCBI Taxonomy" id="51475"/>
    <lineage>
        <taxon>Eukaryota</taxon>
        <taxon>Viridiplantae</taxon>
        <taxon>Streptophyta</taxon>
        <taxon>Embryophyta</taxon>
        <taxon>Tracheophyta</taxon>
        <taxon>Spermatophyta</taxon>
        <taxon>Magnoliopsida</taxon>
        <taxon>Liliopsida</taxon>
        <taxon>Asparagales</taxon>
        <taxon>Asphodelaceae</taxon>
        <taxon>Hemerocallidoideae</taxon>
        <taxon>Phormium</taxon>
    </lineage>
</organism>
<gene>
    <name type="primary">rps7</name>
</gene>
<geneLocation type="chloroplast"/>
<sequence length="155" mass="17343">MSRRGTAEEKTAKSDPIYRNRLVNMLVNRILKHGKKSLAYQIIYRAVKKIQQKTETNPLSVLRQAIRGVTPDIAVKARRVGGSTHQVPIEIGSTQGKALAIRWLLGASRKRPGRNMAFKLSSELVDAAKGSGDAIRKKEETHRMAEANRAFAHFR</sequence>
<accession>Q67IE3</accession>
<dbReference type="EMBL" id="AY147485">
    <property type="protein sequence ID" value="AAN32060.1"/>
    <property type="molecule type" value="Genomic_DNA"/>
</dbReference>
<dbReference type="SMR" id="Q67IE3"/>
<dbReference type="GO" id="GO:0009507">
    <property type="term" value="C:chloroplast"/>
    <property type="evidence" value="ECO:0007669"/>
    <property type="project" value="UniProtKB-SubCell"/>
</dbReference>
<dbReference type="GO" id="GO:0015935">
    <property type="term" value="C:small ribosomal subunit"/>
    <property type="evidence" value="ECO:0007669"/>
    <property type="project" value="InterPro"/>
</dbReference>
<dbReference type="GO" id="GO:0019843">
    <property type="term" value="F:rRNA binding"/>
    <property type="evidence" value="ECO:0007669"/>
    <property type="project" value="UniProtKB-UniRule"/>
</dbReference>
<dbReference type="GO" id="GO:0003735">
    <property type="term" value="F:structural constituent of ribosome"/>
    <property type="evidence" value="ECO:0007669"/>
    <property type="project" value="InterPro"/>
</dbReference>
<dbReference type="GO" id="GO:0006412">
    <property type="term" value="P:translation"/>
    <property type="evidence" value="ECO:0007669"/>
    <property type="project" value="UniProtKB-UniRule"/>
</dbReference>
<dbReference type="CDD" id="cd14871">
    <property type="entry name" value="uS7_Chloroplast"/>
    <property type="match status" value="1"/>
</dbReference>
<dbReference type="FunFam" id="1.10.455.10:FF:000001">
    <property type="entry name" value="30S ribosomal protein S7"/>
    <property type="match status" value="1"/>
</dbReference>
<dbReference type="Gene3D" id="1.10.455.10">
    <property type="entry name" value="Ribosomal protein S7 domain"/>
    <property type="match status" value="1"/>
</dbReference>
<dbReference type="HAMAP" id="MF_00480_B">
    <property type="entry name" value="Ribosomal_uS7_B"/>
    <property type="match status" value="1"/>
</dbReference>
<dbReference type="InterPro" id="IPR000235">
    <property type="entry name" value="Ribosomal_uS7"/>
</dbReference>
<dbReference type="InterPro" id="IPR005717">
    <property type="entry name" value="Ribosomal_uS7_bac/org-type"/>
</dbReference>
<dbReference type="InterPro" id="IPR020606">
    <property type="entry name" value="Ribosomal_uS7_CS"/>
</dbReference>
<dbReference type="InterPro" id="IPR023798">
    <property type="entry name" value="Ribosomal_uS7_dom"/>
</dbReference>
<dbReference type="InterPro" id="IPR036823">
    <property type="entry name" value="Ribosomal_uS7_dom_sf"/>
</dbReference>
<dbReference type="NCBIfam" id="TIGR01029">
    <property type="entry name" value="rpsG_bact"/>
    <property type="match status" value="1"/>
</dbReference>
<dbReference type="PANTHER" id="PTHR11205">
    <property type="entry name" value="RIBOSOMAL PROTEIN S7"/>
    <property type="match status" value="1"/>
</dbReference>
<dbReference type="Pfam" id="PF00177">
    <property type="entry name" value="Ribosomal_S7"/>
    <property type="match status" value="1"/>
</dbReference>
<dbReference type="PIRSF" id="PIRSF002122">
    <property type="entry name" value="RPS7p_RPS7a_RPS5e_RPS7o"/>
    <property type="match status" value="1"/>
</dbReference>
<dbReference type="SUPFAM" id="SSF47973">
    <property type="entry name" value="Ribosomal protein S7"/>
    <property type="match status" value="1"/>
</dbReference>
<dbReference type="PROSITE" id="PS00052">
    <property type="entry name" value="RIBOSOMAL_S7"/>
    <property type="match status" value="1"/>
</dbReference>
<comment type="function">
    <text evidence="1">One of the primary rRNA binding proteins, it binds directly to 16S rRNA where it nucleates assembly of the head domain of the 30S subunit.</text>
</comment>
<comment type="subunit">
    <text>Part of the 30S ribosomal subunit.</text>
</comment>
<comment type="subcellular location">
    <subcellularLocation>
        <location>Plastid</location>
        <location>Chloroplast</location>
    </subcellularLocation>
</comment>
<comment type="similarity">
    <text evidence="2">Belongs to the universal ribosomal protein uS7 family.</text>
</comment>